<keyword id="KW-0030">Aminoacyl-tRNA synthetase</keyword>
<keyword id="KW-0067">ATP-binding</keyword>
<keyword id="KW-0175">Coiled coil</keyword>
<keyword id="KW-0963">Cytoplasm</keyword>
<keyword id="KW-0436">Ligase</keyword>
<keyword id="KW-0547">Nucleotide-binding</keyword>
<keyword id="KW-0648">Protein biosynthesis</keyword>
<sequence length="875" mass="99754">MELASKYNPADVEGKWYQYWLDNKLFSSKPDGREPYTVVIPPPNVTGVLHMGHMLNNTIQDILVRRARMEGKNACWVPGTDHASIATEAKVVNKLAGQGIKKTDLSRDEFLKHAWAWTEEHGGIILKQLRKLGASCDWDRTAFTMDEERSESVIKVFVDLYNKGLIYRGVRMVNWDPKALTALSDEEVIYKEEHSKLYYLRYKVEGDAEGRYAVVATTRPETIMGDTAMCINPNDPKNQWLKGKKVIVPLVNRIIPVIEDDYVDIEFGTGCLKVTPAHDVNDYMLGEKYNLPSIDIFNDNGTLSEAAGLYVGMDRFDVRKQIEQDLQAAGLLEKVEAYTNKVGFSERTNVAIEPKLSMQWFLKMQHFADMALPPVMNDELKFYPAKYKNTYKNWLENIKDWCISRQLWWGHRIPAYFLPEGGYVVAETAEEALKLAQEKTGNTNLKMEDLRQDDDCLDTWFSSWLWPISLFNGINNPNNEEINYYYPTSDLVTGPDIIFFWVARMIMAGYEYKGDMPFKNVYFTGIVRDKLGRKMSKSLGNSPDPLELIDKYGADGVRMGMMLAAPAGNDILFDDALCEQGRNFNNKIWNAFRLVKGWEVADIAQPEYARLATEWFESMLAKTAAEVADLFGKYRLSEALMAVYKLFWDEFSSWYLEMIKPAYGQPIDKATYEKTLGFFDNLLKLLHPFMPFITEELWQHIYDRKEGESLMVQQLNIPTACNEIIVKEFEVVKEVIGGIRTIRLQKNIAQKETLELQVVGVNPVATFNPVITKLCNLSSIEAVENKADGSGSFMVGTTEYAIPLGNLINTEEELAKLEADLKYQEGFLQSVLKKLSNEKFVSKAPANVIDMERKKQADAESKIASLKESIAALKK</sequence>
<protein>
    <recommendedName>
        <fullName evidence="1">Valine--tRNA ligase</fullName>
        <ecNumber evidence="1">6.1.1.9</ecNumber>
    </recommendedName>
    <alternativeName>
        <fullName evidence="1">Valyl-tRNA synthetase</fullName>
        <shortName evidence="1">ValRS</shortName>
    </alternativeName>
</protein>
<gene>
    <name evidence="1" type="primary">valS</name>
    <name type="ordered locus">BVU_2574</name>
</gene>
<feature type="chain" id="PRO_1000022164" description="Valine--tRNA ligase">
    <location>
        <begin position="1"/>
        <end position="875"/>
    </location>
</feature>
<feature type="coiled-coil region" evidence="1">
    <location>
        <begin position="805"/>
        <end position="875"/>
    </location>
</feature>
<feature type="short sequence motif" description="'HIGH' region">
    <location>
        <begin position="43"/>
        <end position="53"/>
    </location>
</feature>
<feature type="short sequence motif" description="'KMSKS' region">
    <location>
        <begin position="534"/>
        <end position="538"/>
    </location>
</feature>
<feature type="binding site" evidence="1">
    <location>
        <position position="537"/>
    </location>
    <ligand>
        <name>ATP</name>
        <dbReference type="ChEBI" id="CHEBI:30616"/>
    </ligand>
</feature>
<dbReference type="EC" id="6.1.1.9" evidence="1"/>
<dbReference type="EMBL" id="CP000139">
    <property type="protein sequence ID" value="ABR40231.1"/>
    <property type="molecule type" value="Genomic_DNA"/>
</dbReference>
<dbReference type="RefSeq" id="WP_005848198.1">
    <property type="nucleotide sequence ID" value="NZ_CAXUAI010000012.1"/>
</dbReference>
<dbReference type="SMR" id="A6L3G7"/>
<dbReference type="STRING" id="435590.BVU_2574"/>
<dbReference type="PaxDb" id="435590-BVU_2574"/>
<dbReference type="GeneID" id="5303538"/>
<dbReference type="KEGG" id="bvu:BVU_2574"/>
<dbReference type="eggNOG" id="COG0525">
    <property type="taxonomic scope" value="Bacteria"/>
</dbReference>
<dbReference type="HOGENOM" id="CLU_001493_0_2_10"/>
<dbReference type="BioCyc" id="BVUL435590:G1G59-2678-MONOMER"/>
<dbReference type="Proteomes" id="UP000002861">
    <property type="component" value="Chromosome"/>
</dbReference>
<dbReference type="GO" id="GO:0005829">
    <property type="term" value="C:cytosol"/>
    <property type="evidence" value="ECO:0007669"/>
    <property type="project" value="TreeGrafter"/>
</dbReference>
<dbReference type="GO" id="GO:0002161">
    <property type="term" value="F:aminoacyl-tRNA deacylase activity"/>
    <property type="evidence" value="ECO:0007669"/>
    <property type="project" value="InterPro"/>
</dbReference>
<dbReference type="GO" id="GO:0005524">
    <property type="term" value="F:ATP binding"/>
    <property type="evidence" value="ECO:0007669"/>
    <property type="project" value="UniProtKB-UniRule"/>
</dbReference>
<dbReference type="GO" id="GO:0004832">
    <property type="term" value="F:valine-tRNA ligase activity"/>
    <property type="evidence" value="ECO:0007669"/>
    <property type="project" value="UniProtKB-UniRule"/>
</dbReference>
<dbReference type="GO" id="GO:0006438">
    <property type="term" value="P:valyl-tRNA aminoacylation"/>
    <property type="evidence" value="ECO:0007669"/>
    <property type="project" value="UniProtKB-UniRule"/>
</dbReference>
<dbReference type="CDD" id="cd07962">
    <property type="entry name" value="Anticodon_Ia_Val"/>
    <property type="match status" value="1"/>
</dbReference>
<dbReference type="CDD" id="cd00817">
    <property type="entry name" value="ValRS_core"/>
    <property type="match status" value="1"/>
</dbReference>
<dbReference type="FunFam" id="1.10.287.380:FF:000001">
    <property type="entry name" value="Valine--tRNA ligase"/>
    <property type="match status" value="1"/>
</dbReference>
<dbReference type="FunFam" id="3.40.50.620:FF:000032">
    <property type="entry name" value="Valine--tRNA ligase"/>
    <property type="match status" value="1"/>
</dbReference>
<dbReference type="FunFam" id="3.90.740.10:FF:000015">
    <property type="entry name" value="Valine--tRNA ligase"/>
    <property type="match status" value="1"/>
</dbReference>
<dbReference type="Gene3D" id="3.40.50.620">
    <property type="entry name" value="HUPs"/>
    <property type="match status" value="2"/>
</dbReference>
<dbReference type="Gene3D" id="1.10.730.10">
    <property type="entry name" value="Isoleucyl-tRNA Synthetase, Domain 1"/>
    <property type="match status" value="1"/>
</dbReference>
<dbReference type="Gene3D" id="1.10.287.380">
    <property type="entry name" value="Valyl-tRNA synthetase, C-terminal domain"/>
    <property type="match status" value="1"/>
</dbReference>
<dbReference type="Gene3D" id="3.90.740.10">
    <property type="entry name" value="Valyl/Leucyl/Isoleucyl-tRNA synthetase, editing domain"/>
    <property type="match status" value="2"/>
</dbReference>
<dbReference type="HAMAP" id="MF_02004">
    <property type="entry name" value="Val_tRNA_synth_type1"/>
    <property type="match status" value="1"/>
</dbReference>
<dbReference type="InterPro" id="IPR001412">
    <property type="entry name" value="aa-tRNA-synth_I_CS"/>
</dbReference>
<dbReference type="InterPro" id="IPR002300">
    <property type="entry name" value="aa-tRNA-synth_Ia"/>
</dbReference>
<dbReference type="InterPro" id="IPR033705">
    <property type="entry name" value="Anticodon_Ia_Val"/>
</dbReference>
<dbReference type="InterPro" id="IPR013155">
    <property type="entry name" value="M/V/L/I-tRNA-synth_anticd-bd"/>
</dbReference>
<dbReference type="InterPro" id="IPR014729">
    <property type="entry name" value="Rossmann-like_a/b/a_fold"/>
</dbReference>
<dbReference type="InterPro" id="IPR010978">
    <property type="entry name" value="tRNA-bd_arm"/>
</dbReference>
<dbReference type="InterPro" id="IPR009080">
    <property type="entry name" value="tRNAsynth_Ia_anticodon-bd"/>
</dbReference>
<dbReference type="InterPro" id="IPR037118">
    <property type="entry name" value="Val-tRNA_synth_C_sf"/>
</dbReference>
<dbReference type="InterPro" id="IPR019499">
    <property type="entry name" value="Val-tRNA_synth_tRNA-bd"/>
</dbReference>
<dbReference type="InterPro" id="IPR009008">
    <property type="entry name" value="Val/Leu/Ile-tRNA-synth_edit"/>
</dbReference>
<dbReference type="InterPro" id="IPR002303">
    <property type="entry name" value="Valyl-tRNA_ligase"/>
</dbReference>
<dbReference type="NCBIfam" id="NF004349">
    <property type="entry name" value="PRK05729.1"/>
    <property type="match status" value="1"/>
</dbReference>
<dbReference type="NCBIfam" id="TIGR00422">
    <property type="entry name" value="valS"/>
    <property type="match status" value="1"/>
</dbReference>
<dbReference type="PANTHER" id="PTHR11946:SF109">
    <property type="entry name" value="VALINE--TRNA LIGASE"/>
    <property type="match status" value="1"/>
</dbReference>
<dbReference type="PANTHER" id="PTHR11946">
    <property type="entry name" value="VALYL-TRNA SYNTHETASES"/>
    <property type="match status" value="1"/>
</dbReference>
<dbReference type="Pfam" id="PF08264">
    <property type="entry name" value="Anticodon_1"/>
    <property type="match status" value="1"/>
</dbReference>
<dbReference type="Pfam" id="PF00133">
    <property type="entry name" value="tRNA-synt_1"/>
    <property type="match status" value="1"/>
</dbReference>
<dbReference type="Pfam" id="PF10458">
    <property type="entry name" value="Val_tRNA-synt_C"/>
    <property type="match status" value="1"/>
</dbReference>
<dbReference type="PRINTS" id="PR00986">
    <property type="entry name" value="TRNASYNTHVAL"/>
</dbReference>
<dbReference type="SUPFAM" id="SSF47323">
    <property type="entry name" value="Anticodon-binding domain of a subclass of class I aminoacyl-tRNA synthetases"/>
    <property type="match status" value="1"/>
</dbReference>
<dbReference type="SUPFAM" id="SSF52374">
    <property type="entry name" value="Nucleotidylyl transferase"/>
    <property type="match status" value="1"/>
</dbReference>
<dbReference type="SUPFAM" id="SSF46589">
    <property type="entry name" value="tRNA-binding arm"/>
    <property type="match status" value="1"/>
</dbReference>
<dbReference type="SUPFAM" id="SSF50677">
    <property type="entry name" value="ValRS/IleRS/LeuRS editing domain"/>
    <property type="match status" value="1"/>
</dbReference>
<dbReference type="PROSITE" id="PS00178">
    <property type="entry name" value="AA_TRNA_LIGASE_I"/>
    <property type="match status" value="1"/>
</dbReference>
<evidence type="ECO:0000255" key="1">
    <source>
        <dbReference type="HAMAP-Rule" id="MF_02004"/>
    </source>
</evidence>
<organism>
    <name type="scientific">Phocaeicola vulgatus (strain ATCC 8482 / DSM 1447 / JCM 5826 / CCUG 4940 / NBRC 14291 / NCTC 11154)</name>
    <name type="common">Bacteroides vulgatus</name>
    <dbReference type="NCBI Taxonomy" id="435590"/>
    <lineage>
        <taxon>Bacteria</taxon>
        <taxon>Pseudomonadati</taxon>
        <taxon>Bacteroidota</taxon>
        <taxon>Bacteroidia</taxon>
        <taxon>Bacteroidales</taxon>
        <taxon>Bacteroidaceae</taxon>
        <taxon>Phocaeicola</taxon>
    </lineage>
</organism>
<reference key="1">
    <citation type="journal article" date="2007" name="PLoS Biol.">
        <title>Evolution of symbiotic bacteria in the distal human intestine.</title>
        <authorList>
            <person name="Xu J."/>
            <person name="Mahowald M.A."/>
            <person name="Ley R.E."/>
            <person name="Lozupone C.A."/>
            <person name="Hamady M."/>
            <person name="Martens E.C."/>
            <person name="Henrissat B."/>
            <person name="Coutinho P.M."/>
            <person name="Minx P."/>
            <person name="Latreille P."/>
            <person name="Cordum H."/>
            <person name="Van Brunt A."/>
            <person name="Kim K."/>
            <person name="Fulton R.S."/>
            <person name="Fulton L.A."/>
            <person name="Clifton S.W."/>
            <person name="Wilson R.K."/>
            <person name="Knight R.D."/>
            <person name="Gordon J.I."/>
        </authorList>
    </citation>
    <scope>NUCLEOTIDE SEQUENCE [LARGE SCALE GENOMIC DNA]</scope>
    <source>
        <strain>ATCC 8482 / DSM 1447 / JCM 5826 / CCUG 4940 / NBRC 14291 / NCTC 11154</strain>
    </source>
</reference>
<accession>A6L3G7</accession>
<name>SYV_PHOV8</name>
<comment type="function">
    <text evidence="1">Catalyzes the attachment of valine to tRNA(Val). As ValRS can inadvertently accommodate and process structurally similar amino acids such as threonine, to avoid such errors, it has a 'posttransfer' editing activity that hydrolyzes mischarged Thr-tRNA(Val) in a tRNA-dependent manner.</text>
</comment>
<comment type="catalytic activity">
    <reaction evidence="1">
        <text>tRNA(Val) + L-valine + ATP = L-valyl-tRNA(Val) + AMP + diphosphate</text>
        <dbReference type="Rhea" id="RHEA:10704"/>
        <dbReference type="Rhea" id="RHEA-COMP:9672"/>
        <dbReference type="Rhea" id="RHEA-COMP:9708"/>
        <dbReference type="ChEBI" id="CHEBI:30616"/>
        <dbReference type="ChEBI" id="CHEBI:33019"/>
        <dbReference type="ChEBI" id="CHEBI:57762"/>
        <dbReference type="ChEBI" id="CHEBI:78442"/>
        <dbReference type="ChEBI" id="CHEBI:78537"/>
        <dbReference type="ChEBI" id="CHEBI:456215"/>
        <dbReference type="EC" id="6.1.1.9"/>
    </reaction>
</comment>
<comment type="subunit">
    <text evidence="1">Monomer.</text>
</comment>
<comment type="subcellular location">
    <subcellularLocation>
        <location evidence="1">Cytoplasm</location>
    </subcellularLocation>
</comment>
<comment type="domain">
    <text evidence="1">ValRS has two distinct active sites: one for aminoacylation and one for editing. The misactivated threonine is translocated from the active site to the editing site.</text>
</comment>
<comment type="domain">
    <text evidence="1">The C-terminal coiled-coil domain is crucial for aminoacylation activity.</text>
</comment>
<comment type="similarity">
    <text evidence="1">Belongs to the class-I aminoacyl-tRNA synthetase family. ValS type 1 subfamily.</text>
</comment>
<proteinExistence type="inferred from homology"/>